<gene>
    <name evidence="7" type="primary">wtf16</name>
    <name type="synonym">wtf8</name>
    <name evidence="7" type="ORF">SPCC1450.08c</name>
</gene>
<protein>
    <recommendedName>
        <fullName evidence="6">Meiotic drive suppressor wtf16</fullName>
    </recommendedName>
</protein>
<organism>
    <name type="scientific">Schizosaccharomyces pombe (strain 972 / ATCC 24843)</name>
    <name type="common">Fission yeast</name>
    <dbReference type="NCBI Taxonomy" id="284812"/>
    <lineage>
        <taxon>Eukaryota</taxon>
        <taxon>Fungi</taxon>
        <taxon>Dikarya</taxon>
        <taxon>Ascomycota</taxon>
        <taxon>Taphrinomycotina</taxon>
        <taxon>Schizosaccharomycetes</taxon>
        <taxon>Schizosaccharomycetales</taxon>
        <taxon>Schizosaccharomycetaceae</taxon>
        <taxon>Schizosaccharomyces</taxon>
    </lineage>
</organism>
<accession>Q9Y7N5</accession>
<comment type="function">
    <text evidence="1 2">Acts as a suppressor component of the dual wtf meiotic drive system, and can suppress but not confer meiotic drive by compatible poisons (By similarity). Wtf meiotic drive systems promote unequal transmission of alleles from the parental zygote to progeny spores by encoding a poison and an antidote from the same locus; the poison is trans-acting and forms toxic aggregates in all spores within an ascus, wherease the antidote is spore-specific and targets aggregates for degradation by the vacuole (By similarity). Meiotic drive by wtf systems therefore lead to poisoning of all progeny that do not inherit the dual poison/antidote allele, or express a compatible antidote (By similarity).</text>
</comment>
<comment type="subunit">
    <text evidence="1 3">Homomer (By similarity). Interacts with other proteins that exhibit high sequence similarity (By similarity).</text>
</comment>
<comment type="subcellular location">
    <subcellularLocation>
        <location evidence="1 4">Spore membrane</location>
        <topology evidence="4">Multi-pass membrane protein</topology>
    </subcellularLocation>
    <subcellularLocation>
        <location evidence="1 4">Vacuole membrane</location>
        <topology evidence="4">Multi-pass membrane protein</topology>
    </subcellularLocation>
</comment>
<comment type="similarity">
    <text evidence="6">Belongs to the WTF family.</text>
</comment>
<dbReference type="EMBL" id="CU329672">
    <property type="protein sequence ID" value="CAB40175.2"/>
    <property type="molecule type" value="Genomic_DNA"/>
</dbReference>
<dbReference type="PIR" id="T40990">
    <property type="entry name" value="T40990"/>
</dbReference>
<dbReference type="RefSeq" id="NP_588307.2">
    <property type="nucleotide sequence ID" value="NM_001023297.2"/>
</dbReference>
<dbReference type="BioGRID" id="275728">
    <property type="interactions" value="31"/>
</dbReference>
<dbReference type="STRING" id="284812.Q9Y7N5"/>
<dbReference type="PaxDb" id="4896-SPCC1450.08c.1"/>
<dbReference type="EnsemblFungi" id="SPCC1450.08c.1">
    <property type="protein sequence ID" value="SPCC1450.08c.1:pep"/>
    <property type="gene ID" value="SPCC1450.08c"/>
</dbReference>
<dbReference type="GeneID" id="2539156"/>
<dbReference type="KEGG" id="spo:2539156"/>
<dbReference type="PomBase" id="SPCC1450.08c">
    <property type="gene designation" value="wtf16"/>
</dbReference>
<dbReference type="VEuPathDB" id="FungiDB:SPCC1450.08c"/>
<dbReference type="HOGENOM" id="CLU_763247_0_0_1"/>
<dbReference type="InParanoid" id="Q9Y7N5"/>
<dbReference type="PRO" id="PR:Q9Y7N5"/>
<dbReference type="Proteomes" id="UP000002485">
    <property type="component" value="Chromosome III"/>
</dbReference>
<dbReference type="GO" id="GO:0005737">
    <property type="term" value="C:cytoplasm"/>
    <property type="evidence" value="ECO:0000250"/>
    <property type="project" value="PomBase"/>
</dbReference>
<dbReference type="GO" id="GO:0000324">
    <property type="term" value="C:fungal-type vacuole"/>
    <property type="evidence" value="ECO:0007005"/>
    <property type="project" value="PomBase"/>
</dbReference>
<dbReference type="GO" id="GO:0005774">
    <property type="term" value="C:vacuolar membrane"/>
    <property type="evidence" value="ECO:0007669"/>
    <property type="project" value="UniProtKB-SubCell"/>
</dbReference>
<dbReference type="GO" id="GO:0110134">
    <property type="term" value="P:meiotic drive"/>
    <property type="evidence" value="ECO:0000255"/>
    <property type="project" value="PomBase"/>
</dbReference>
<dbReference type="InterPro" id="IPR004982">
    <property type="entry name" value="WTF"/>
</dbReference>
<dbReference type="Pfam" id="PF03303">
    <property type="entry name" value="WTF"/>
    <property type="match status" value="1"/>
</dbReference>
<evidence type="ECO:0000250" key="1">
    <source>
        <dbReference type="UniProtKB" id="A0A218N034"/>
    </source>
</evidence>
<evidence type="ECO:0000250" key="2">
    <source>
        <dbReference type="UniProtKB" id="A0A482ATU4"/>
    </source>
</evidence>
<evidence type="ECO:0000250" key="3">
    <source>
        <dbReference type="UniProtKB" id="O74420"/>
    </source>
</evidence>
<evidence type="ECO:0000255" key="4"/>
<evidence type="ECO:0000256" key="5">
    <source>
        <dbReference type="SAM" id="MobiDB-lite"/>
    </source>
</evidence>
<evidence type="ECO:0000305" key="6"/>
<evidence type="ECO:0000312" key="7">
    <source>
        <dbReference type="PomBase" id="SPCC1450.08c"/>
    </source>
</evidence>
<name>WTF16_SCHPO</name>
<feature type="chain" id="PRO_0000193229" description="Meiotic drive suppressor wtf16">
    <location>
        <begin position="1"/>
        <end position="319"/>
    </location>
</feature>
<feature type="transmembrane region" description="Helical" evidence="4">
    <location>
        <begin position="73"/>
        <end position="93"/>
    </location>
</feature>
<feature type="transmembrane region" description="Helical" evidence="4">
    <location>
        <begin position="110"/>
        <end position="130"/>
    </location>
</feature>
<feature type="transmembrane region" description="Helical" evidence="4">
    <location>
        <begin position="153"/>
        <end position="173"/>
    </location>
</feature>
<feature type="transmembrane region" description="Helical" evidence="4">
    <location>
        <begin position="187"/>
        <end position="207"/>
    </location>
</feature>
<feature type="transmembrane region" description="Helical" evidence="4">
    <location>
        <begin position="215"/>
        <end position="235"/>
    </location>
</feature>
<feature type="transmembrane region" description="Helical" evidence="4">
    <location>
        <begin position="241"/>
        <end position="261"/>
    </location>
</feature>
<feature type="region of interest" description="Disordered" evidence="5">
    <location>
        <begin position="1"/>
        <end position="22"/>
    </location>
</feature>
<feature type="region of interest" description="Disordered" evidence="5">
    <location>
        <begin position="35"/>
        <end position="68"/>
    </location>
</feature>
<reference key="1">
    <citation type="journal article" date="2002" name="Nature">
        <title>The genome sequence of Schizosaccharomyces pombe.</title>
        <authorList>
            <person name="Wood V."/>
            <person name="Gwilliam R."/>
            <person name="Rajandream M.A."/>
            <person name="Lyne M.H."/>
            <person name="Lyne R."/>
            <person name="Stewart A."/>
            <person name="Sgouros J.G."/>
            <person name="Peat N."/>
            <person name="Hayles J."/>
            <person name="Baker S.G."/>
            <person name="Basham D."/>
            <person name="Bowman S."/>
            <person name="Brooks K."/>
            <person name="Brown D."/>
            <person name="Brown S."/>
            <person name="Chillingworth T."/>
            <person name="Churcher C.M."/>
            <person name="Collins M."/>
            <person name="Connor R."/>
            <person name="Cronin A."/>
            <person name="Davis P."/>
            <person name="Feltwell T."/>
            <person name="Fraser A."/>
            <person name="Gentles S."/>
            <person name="Goble A."/>
            <person name="Hamlin N."/>
            <person name="Harris D.E."/>
            <person name="Hidalgo J."/>
            <person name="Hodgson G."/>
            <person name="Holroyd S."/>
            <person name="Hornsby T."/>
            <person name="Howarth S."/>
            <person name="Huckle E.J."/>
            <person name="Hunt S."/>
            <person name="Jagels K."/>
            <person name="James K.D."/>
            <person name="Jones L."/>
            <person name="Jones M."/>
            <person name="Leather S."/>
            <person name="McDonald S."/>
            <person name="McLean J."/>
            <person name="Mooney P."/>
            <person name="Moule S."/>
            <person name="Mungall K.L."/>
            <person name="Murphy L.D."/>
            <person name="Niblett D."/>
            <person name="Odell C."/>
            <person name="Oliver K."/>
            <person name="O'Neil S."/>
            <person name="Pearson D."/>
            <person name="Quail M.A."/>
            <person name="Rabbinowitsch E."/>
            <person name="Rutherford K.M."/>
            <person name="Rutter S."/>
            <person name="Saunders D."/>
            <person name="Seeger K."/>
            <person name="Sharp S."/>
            <person name="Skelton J."/>
            <person name="Simmonds M.N."/>
            <person name="Squares R."/>
            <person name="Squares S."/>
            <person name="Stevens K."/>
            <person name="Taylor K."/>
            <person name="Taylor R.G."/>
            <person name="Tivey A."/>
            <person name="Walsh S.V."/>
            <person name="Warren T."/>
            <person name="Whitehead S."/>
            <person name="Woodward J.R."/>
            <person name="Volckaert G."/>
            <person name="Aert R."/>
            <person name="Robben J."/>
            <person name="Grymonprez B."/>
            <person name="Weltjens I."/>
            <person name="Vanstreels E."/>
            <person name="Rieger M."/>
            <person name="Schaefer M."/>
            <person name="Mueller-Auer S."/>
            <person name="Gabel C."/>
            <person name="Fuchs M."/>
            <person name="Duesterhoeft A."/>
            <person name="Fritzc C."/>
            <person name="Holzer E."/>
            <person name="Moestl D."/>
            <person name="Hilbert H."/>
            <person name="Borzym K."/>
            <person name="Langer I."/>
            <person name="Beck A."/>
            <person name="Lehrach H."/>
            <person name="Reinhardt R."/>
            <person name="Pohl T.M."/>
            <person name="Eger P."/>
            <person name="Zimmermann W."/>
            <person name="Wedler H."/>
            <person name="Wambutt R."/>
            <person name="Purnelle B."/>
            <person name="Goffeau A."/>
            <person name="Cadieu E."/>
            <person name="Dreano S."/>
            <person name="Gloux S."/>
            <person name="Lelaure V."/>
            <person name="Mottier S."/>
            <person name="Galibert F."/>
            <person name="Aves S.J."/>
            <person name="Xiang Z."/>
            <person name="Hunt C."/>
            <person name="Moore K."/>
            <person name="Hurst S.M."/>
            <person name="Lucas M."/>
            <person name="Rochet M."/>
            <person name="Gaillardin C."/>
            <person name="Tallada V.A."/>
            <person name="Garzon A."/>
            <person name="Thode G."/>
            <person name="Daga R.R."/>
            <person name="Cruzado L."/>
            <person name="Jimenez J."/>
            <person name="Sanchez M."/>
            <person name="del Rey F."/>
            <person name="Benito J."/>
            <person name="Dominguez A."/>
            <person name="Revuelta J.L."/>
            <person name="Moreno S."/>
            <person name="Armstrong J."/>
            <person name="Forsburg S.L."/>
            <person name="Cerutti L."/>
            <person name="Lowe T."/>
            <person name="McCombie W.R."/>
            <person name="Paulsen I."/>
            <person name="Potashkin J."/>
            <person name="Shpakovski G.V."/>
            <person name="Ussery D."/>
            <person name="Barrell B.G."/>
            <person name="Nurse P."/>
        </authorList>
    </citation>
    <scope>NUCLEOTIDE SEQUENCE [LARGE SCALE GENOMIC DNA]</scope>
    <source>
        <strain>972 / ATCC 24843</strain>
    </source>
</reference>
<reference key="2">
    <citation type="journal article" date="2011" name="Science">
        <title>Comparative functional genomics of the fission yeasts.</title>
        <authorList>
            <person name="Rhind N."/>
            <person name="Chen Z."/>
            <person name="Yassour M."/>
            <person name="Thompson D.A."/>
            <person name="Haas B.J."/>
            <person name="Habib N."/>
            <person name="Wapinski I."/>
            <person name="Roy S."/>
            <person name="Lin M.F."/>
            <person name="Heiman D.I."/>
            <person name="Young S.K."/>
            <person name="Furuya K."/>
            <person name="Guo Y."/>
            <person name="Pidoux A."/>
            <person name="Chen H.M."/>
            <person name="Robbertse B."/>
            <person name="Goldberg J.M."/>
            <person name="Aoki K."/>
            <person name="Bayne E.H."/>
            <person name="Berlin A.M."/>
            <person name="Desjardins C.A."/>
            <person name="Dobbs E."/>
            <person name="Dukaj L."/>
            <person name="Fan L."/>
            <person name="FitzGerald M.G."/>
            <person name="French C."/>
            <person name="Gujja S."/>
            <person name="Hansen K."/>
            <person name="Keifenheim D."/>
            <person name="Levin J.Z."/>
            <person name="Mosher R.A."/>
            <person name="Mueller C.A."/>
            <person name="Pfiffner J."/>
            <person name="Priest M."/>
            <person name="Russ C."/>
            <person name="Smialowska A."/>
            <person name="Swoboda P."/>
            <person name="Sykes S.M."/>
            <person name="Vaughn M."/>
            <person name="Vengrova S."/>
            <person name="Yoder R."/>
            <person name="Zeng Q."/>
            <person name="Allshire R."/>
            <person name="Baulcombe D."/>
            <person name="Birren B.W."/>
            <person name="Brown W."/>
            <person name="Ekwall K."/>
            <person name="Kellis M."/>
            <person name="Leatherwood J."/>
            <person name="Levin H."/>
            <person name="Margalit H."/>
            <person name="Martienssen R."/>
            <person name="Nieduszynski C.A."/>
            <person name="Spatafora J.W."/>
            <person name="Friedman N."/>
            <person name="Dalgaard J.Z."/>
            <person name="Baumann P."/>
            <person name="Niki H."/>
            <person name="Regev A."/>
            <person name="Nusbaum C."/>
        </authorList>
    </citation>
    <scope>REVISION OF GENE MODEL</scope>
</reference>
<reference key="3">
    <citation type="journal article" date="2006" name="Nat. Biotechnol.">
        <title>ORFeome cloning and global analysis of protein localization in the fission yeast Schizosaccharomyces pombe.</title>
        <authorList>
            <person name="Matsuyama A."/>
            <person name="Arai R."/>
            <person name="Yashiroda Y."/>
            <person name="Shirai A."/>
            <person name="Kamata A."/>
            <person name="Sekido S."/>
            <person name="Kobayashi Y."/>
            <person name="Hashimoto A."/>
            <person name="Hamamoto M."/>
            <person name="Hiraoka Y."/>
            <person name="Horinouchi S."/>
            <person name="Yoshida M."/>
        </authorList>
    </citation>
    <scope>SUBCELLULAR LOCATION [LARGE SCALE ANALYSIS]</scope>
</reference>
<proteinExistence type="inferred from homology"/>
<sequence>MKNNYTSLKSPIDEGDESKTGHEIDLEKGLLPEYDSEEEGALPPYSDHARVSNSPNTHRENNPSRSTDNSSPFLIKLLISFTPIYVLNVLAICYLKYKDAFFKNYGAAEWTLFGFWCLVCTLALIFLTYFYETWTKAVKVTAVGLYNSRKKWVVIIWLLWVVICFVLFGCIKFGNLNLDKALICSTCSISAALLLFLLYVRLPFWTLKHMFSGLFQVLGVQSCVVIVTKGLMYLFDKHIDATGYEIEATSLFVIGNFFFFYEMECPGALKRMPKFIRNGIASFLEGIGNAIGRIGNAFRGANDNNNNIPLEETEAESEV</sequence>
<keyword id="KW-0472">Membrane</keyword>
<keyword id="KW-1185">Reference proteome</keyword>
<keyword id="KW-0812">Transmembrane</keyword>
<keyword id="KW-1133">Transmembrane helix</keyword>
<keyword id="KW-0926">Vacuole</keyword>